<evidence type="ECO:0000250" key="1"/>
<evidence type="ECO:0000305" key="2"/>
<proteinExistence type="inferred from homology"/>
<sequence>MGDHNLPDFQTCLKFSVTAKKSFLCMYRDSVSKEKLASSMPSTCDIQLKRAINDAYPGGGIKVTVLNSTTASLDSLATTHVKEFEIVIIPDINSLLQPDQAKLVKIMRDCTVAIEKAQSTRIFIGVVHWNNPVQPSGAAKDGDEAGKPAPKTRIFLPTSLRMGAWLKHKFWFACAPPYLDFESSTESSINTRANNSIGMAEEEKQEPESKRSIILNEEANLNDVFVGSTVRRYILDIMVHLRTHRLTYNAKAGGVYTNSLDDVVLLSRLIGLHSGKMFVSPSHVKEASRWYFPMHLELVQRSSMDSSLLYGSDPNLVDEMLEKLAKIKCEEVNEFENPLFLESLVVKNVLSKVVPPV</sequence>
<name>MTC2_YEAS1</name>
<feature type="chain" id="PRO_0000407765" description="Maintenance of telomere capping protein 2">
    <location>
        <begin position="1"/>
        <end position="357"/>
    </location>
</feature>
<reference key="1">
    <citation type="submission" date="2005-03" db="EMBL/GenBank/DDBJ databases">
        <title>Annotation of the Saccharomyces cerevisiae RM11-1a genome.</title>
        <authorList>
            <consortium name="The Broad Institute Genome Sequencing Platform"/>
            <person name="Birren B.W."/>
            <person name="Lander E.S."/>
            <person name="Galagan J.E."/>
            <person name="Nusbaum C."/>
            <person name="Devon K."/>
            <person name="Cuomo C."/>
            <person name="Jaffe D.B."/>
            <person name="Butler J."/>
            <person name="Alvarez P."/>
            <person name="Gnerre S."/>
            <person name="Grabherr M."/>
            <person name="Kleber M."/>
            <person name="Mauceli E.W."/>
            <person name="Brockman W."/>
            <person name="MacCallum I.A."/>
            <person name="Rounsley S."/>
            <person name="Young S.K."/>
            <person name="LaButti K."/>
            <person name="Pushparaj V."/>
            <person name="DeCaprio D."/>
            <person name="Crawford M."/>
            <person name="Koehrsen M."/>
            <person name="Engels R."/>
            <person name="Montgomery P."/>
            <person name="Pearson M."/>
            <person name="Howarth C."/>
            <person name="Larson L."/>
            <person name="Luoma S."/>
            <person name="White J."/>
            <person name="O'Leary S."/>
            <person name="Kodira C.D."/>
            <person name="Zeng Q."/>
            <person name="Yandava C."/>
            <person name="Alvarado L."/>
            <person name="Pratt S."/>
            <person name="Kruglyak L."/>
        </authorList>
    </citation>
    <scope>NUCLEOTIDE SEQUENCE [LARGE SCALE GENOMIC DNA]</scope>
    <source>
        <strain>RM11-1a</strain>
    </source>
</reference>
<gene>
    <name type="primary">MTC2</name>
    <name type="ORF">SCRG_03922</name>
</gene>
<organism>
    <name type="scientific">Saccharomyces cerevisiae (strain RM11-1a)</name>
    <name type="common">Baker's yeast</name>
    <dbReference type="NCBI Taxonomy" id="285006"/>
    <lineage>
        <taxon>Eukaryota</taxon>
        <taxon>Fungi</taxon>
        <taxon>Dikarya</taxon>
        <taxon>Ascomycota</taxon>
        <taxon>Saccharomycotina</taxon>
        <taxon>Saccharomycetes</taxon>
        <taxon>Saccharomycetales</taxon>
        <taxon>Saccharomycetaceae</taxon>
        <taxon>Saccharomyces</taxon>
    </lineage>
</organism>
<accession>B3LQZ6</accession>
<comment type="function">
    <text evidence="1">May be involved in telomere capping.</text>
</comment>
<comment type="similarity">
    <text evidence="2">Belongs to the MTC2 family.</text>
</comment>
<dbReference type="EMBL" id="CH408051">
    <property type="protein sequence ID" value="EDV12999.1"/>
    <property type="molecule type" value="Genomic_DNA"/>
</dbReference>
<dbReference type="HOGENOM" id="CLU_060779_1_0_1"/>
<dbReference type="OrthoDB" id="3978at4893"/>
<dbReference type="Proteomes" id="UP000008335">
    <property type="component" value="Unassembled WGS sequence"/>
</dbReference>
<protein>
    <recommendedName>
        <fullName>Maintenance of telomere capping protein 2</fullName>
    </recommendedName>
</protein>